<protein>
    <recommendedName>
        <fullName evidence="1">Urease subunit beta</fullName>
        <ecNumber evidence="1">3.5.1.5</ecNumber>
    </recommendedName>
    <alternativeName>
        <fullName evidence="1">Urea amidohydrolase subunit beta</fullName>
    </alternativeName>
</protein>
<name>URE2_KLEP3</name>
<keyword id="KW-0963">Cytoplasm</keyword>
<keyword id="KW-0378">Hydrolase</keyword>
<proteinExistence type="inferred from homology"/>
<sequence length="106" mass="11725">MIPGEYHVKPGQIALNTGRATCRVVVENHGDRPIQVGSHYHFAEVNPALKFDRQQVTGYRLNIPAGTAVRFEPGQKREVELVAFAGHRAVFGFRGEVMGPLEANDE</sequence>
<comment type="catalytic activity">
    <reaction evidence="1">
        <text>urea + 2 H2O + H(+) = hydrogencarbonate + 2 NH4(+)</text>
        <dbReference type="Rhea" id="RHEA:20557"/>
        <dbReference type="ChEBI" id="CHEBI:15377"/>
        <dbReference type="ChEBI" id="CHEBI:15378"/>
        <dbReference type="ChEBI" id="CHEBI:16199"/>
        <dbReference type="ChEBI" id="CHEBI:17544"/>
        <dbReference type="ChEBI" id="CHEBI:28938"/>
        <dbReference type="EC" id="3.5.1.5"/>
    </reaction>
</comment>
<comment type="pathway">
    <text evidence="1">Nitrogen metabolism; urea degradation; CO(2) and NH(3) from urea (urease route): step 1/1.</text>
</comment>
<comment type="subunit">
    <text evidence="1">Heterotrimer of UreA (gamma), UreB (beta) and UreC (alpha) subunits. Three heterotrimers associate to form the active enzyme.</text>
</comment>
<comment type="subcellular location">
    <subcellularLocation>
        <location evidence="1">Cytoplasm</location>
    </subcellularLocation>
</comment>
<comment type="similarity">
    <text evidence="1">Belongs to the urease beta subunit family.</text>
</comment>
<feature type="chain" id="PRO_1000188925" description="Urease subunit beta">
    <location>
        <begin position="1"/>
        <end position="106"/>
    </location>
</feature>
<dbReference type="EC" id="3.5.1.5" evidence="1"/>
<dbReference type="EMBL" id="CP000964">
    <property type="protein sequence ID" value="ACI10492.1"/>
    <property type="molecule type" value="Genomic_DNA"/>
</dbReference>
<dbReference type="SMR" id="B5XU28"/>
<dbReference type="KEGG" id="kpe:KPK_0653"/>
<dbReference type="HOGENOM" id="CLU_129707_1_1_6"/>
<dbReference type="UniPathway" id="UPA00258">
    <property type="reaction ID" value="UER00370"/>
</dbReference>
<dbReference type="Proteomes" id="UP000001734">
    <property type="component" value="Chromosome"/>
</dbReference>
<dbReference type="GO" id="GO:0035550">
    <property type="term" value="C:urease complex"/>
    <property type="evidence" value="ECO:0007669"/>
    <property type="project" value="InterPro"/>
</dbReference>
<dbReference type="GO" id="GO:0009039">
    <property type="term" value="F:urease activity"/>
    <property type="evidence" value="ECO:0007669"/>
    <property type="project" value="UniProtKB-UniRule"/>
</dbReference>
<dbReference type="GO" id="GO:0043419">
    <property type="term" value="P:urea catabolic process"/>
    <property type="evidence" value="ECO:0007669"/>
    <property type="project" value="UniProtKB-UniRule"/>
</dbReference>
<dbReference type="CDD" id="cd00407">
    <property type="entry name" value="Urease_beta"/>
    <property type="match status" value="1"/>
</dbReference>
<dbReference type="FunFam" id="2.10.150.10:FF:000001">
    <property type="entry name" value="Urease subunit beta"/>
    <property type="match status" value="1"/>
</dbReference>
<dbReference type="Gene3D" id="2.10.150.10">
    <property type="entry name" value="Urease, beta subunit"/>
    <property type="match status" value="1"/>
</dbReference>
<dbReference type="HAMAP" id="MF_01954">
    <property type="entry name" value="Urease_beta"/>
    <property type="match status" value="1"/>
</dbReference>
<dbReference type="InterPro" id="IPR002019">
    <property type="entry name" value="Urease_beta-like"/>
</dbReference>
<dbReference type="InterPro" id="IPR036461">
    <property type="entry name" value="Urease_betasu_sf"/>
</dbReference>
<dbReference type="InterPro" id="IPR050069">
    <property type="entry name" value="Urease_subunit"/>
</dbReference>
<dbReference type="NCBIfam" id="NF009682">
    <property type="entry name" value="PRK13203.1"/>
    <property type="match status" value="1"/>
</dbReference>
<dbReference type="NCBIfam" id="TIGR00192">
    <property type="entry name" value="urease_beta"/>
    <property type="match status" value="1"/>
</dbReference>
<dbReference type="PANTHER" id="PTHR33569">
    <property type="entry name" value="UREASE"/>
    <property type="match status" value="1"/>
</dbReference>
<dbReference type="PANTHER" id="PTHR33569:SF1">
    <property type="entry name" value="UREASE"/>
    <property type="match status" value="1"/>
</dbReference>
<dbReference type="Pfam" id="PF00699">
    <property type="entry name" value="Urease_beta"/>
    <property type="match status" value="1"/>
</dbReference>
<dbReference type="SUPFAM" id="SSF51278">
    <property type="entry name" value="Urease, beta-subunit"/>
    <property type="match status" value="1"/>
</dbReference>
<evidence type="ECO:0000255" key="1">
    <source>
        <dbReference type="HAMAP-Rule" id="MF_01954"/>
    </source>
</evidence>
<organism>
    <name type="scientific">Klebsiella pneumoniae (strain 342)</name>
    <dbReference type="NCBI Taxonomy" id="507522"/>
    <lineage>
        <taxon>Bacteria</taxon>
        <taxon>Pseudomonadati</taxon>
        <taxon>Pseudomonadota</taxon>
        <taxon>Gammaproteobacteria</taxon>
        <taxon>Enterobacterales</taxon>
        <taxon>Enterobacteriaceae</taxon>
        <taxon>Klebsiella/Raoultella group</taxon>
        <taxon>Klebsiella</taxon>
        <taxon>Klebsiella pneumoniae complex</taxon>
    </lineage>
</organism>
<accession>B5XU28</accession>
<reference key="1">
    <citation type="journal article" date="2008" name="PLoS Genet.">
        <title>Complete genome sequence of the N2-fixing broad host range endophyte Klebsiella pneumoniae 342 and virulence predictions verified in mice.</title>
        <authorList>
            <person name="Fouts D.E."/>
            <person name="Tyler H.L."/>
            <person name="DeBoy R.T."/>
            <person name="Daugherty S."/>
            <person name="Ren Q."/>
            <person name="Badger J.H."/>
            <person name="Durkin A.S."/>
            <person name="Huot H."/>
            <person name="Shrivastava S."/>
            <person name="Kothari S."/>
            <person name="Dodson R.J."/>
            <person name="Mohamoud Y."/>
            <person name="Khouri H."/>
            <person name="Roesch L.F.W."/>
            <person name="Krogfelt K.A."/>
            <person name="Struve C."/>
            <person name="Triplett E.W."/>
            <person name="Methe B.A."/>
        </authorList>
    </citation>
    <scope>NUCLEOTIDE SEQUENCE [LARGE SCALE GENOMIC DNA]</scope>
    <source>
        <strain>342</strain>
    </source>
</reference>
<gene>
    <name evidence="1" type="primary">ureB</name>
    <name type="ordered locus">KPK_0653</name>
</gene>